<sequence>MKQLLKDSWWNQLKDEFDKPYYQELREMLKQEYSSQTIYPDSHDIFNALHYTPYEDVKAVILGQDPYHGPGQAHGLSFSVQPGVRQPPSLKNIFIELQDDIGCSVPNHGSLVSWAKQGVLLLNTVLTVRRGQANSHKGKGWERLTDRIIDVVNEREKPIVFILWGRHAQMKKERIDTSKHIIIESTHPSPFSARNGFFGSRPFSRTNAALEKMGEQPIDWCIPDLPQ</sequence>
<accession>A7ZA24</accession>
<organism>
    <name type="scientific">Bacillus velezensis (strain DSM 23117 / BGSC 10A6 / LMG 26770 / FZB42)</name>
    <name type="common">Bacillus amyloliquefaciens subsp. plantarum</name>
    <dbReference type="NCBI Taxonomy" id="326423"/>
    <lineage>
        <taxon>Bacteria</taxon>
        <taxon>Bacillati</taxon>
        <taxon>Bacillota</taxon>
        <taxon>Bacilli</taxon>
        <taxon>Bacillales</taxon>
        <taxon>Bacillaceae</taxon>
        <taxon>Bacillus</taxon>
        <taxon>Bacillus amyloliquefaciens group</taxon>
    </lineage>
</organism>
<gene>
    <name evidence="1" type="primary">ung</name>
    <name type="ordered locus">RBAM_035210</name>
</gene>
<comment type="function">
    <text evidence="1">Excises uracil residues from the DNA which can arise as a result of misincorporation of dUMP residues by DNA polymerase or due to deamination of cytosine.</text>
</comment>
<comment type="catalytic activity">
    <reaction evidence="1">
        <text>Hydrolyzes single-stranded DNA or mismatched double-stranded DNA and polynucleotides, releasing free uracil.</text>
        <dbReference type="EC" id="3.2.2.27"/>
    </reaction>
</comment>
<comment type="subcellular location">
    <subcellularLocation>
        <location evidence="1">Cytoplasm</location>
    </subcellularLocation>
</comment>
<comment type="similarity">
    <text evidence="1">Belongs to the uracil-DNA glycosylase (UDG) superfamily. UNG family.</text>
</comment>
<protein>
    <recommendedName>
        <fullName evidence="1">Uracil-DNA glycosylase</fullName>
        <shortName evidence="1">UDG</shortName>
        <ecNumber evidence="1">3.2.2.27</ecNumber>
    </recommendedName>
</protein>
<proteinExistence type="inferred from homology"/>
<name>UNG_BACVZ</name>
<evidence type="ECO:0000255" key="1">
    <source>
        <dbReference type="HAMAP-Rule" id="MF_00148"/>
    </source>
</evidence>
<keyword id="KW-0963">Cytoplasm</keyword>
<keyword id="KW-0227">DNA damage</keyword>
<keyword id="KW-0234">DNA repair</keyword>
<keyword id="KW-0378">Hydrolase</keyword>
<dbReference type="EC" id="3.2.2.27" evidence="1"/>
<dbReference type="EMBL" id="CP000560">
    <property type="protein sequence ID" value="ABS75850.1"/>
    <property type="molecule type" value="Genomic_DNA"/>
</dbReference>
<dbReference type="RefSeq" id="WP_012118732.1">
    <property type="nucleotide sequence ID" value="NC_009725.2"/>
</dbReference>
<dbReference type="SMR" id="A7ZA24"/>
<dbReference type="GeneID" id="93082664"/>
<dbReference type="KEGG" id="bay:RBAM_035210"/>
<dbReference type="HOGENOM" id="CLU_032162_3_0_9"/>
<dbReference type="Proteomes" id="UP000001120">
    <property type="component" value="Chromosome"/>
</dbReference>
<dbReference type="GO" id="GO:0005737">
    <property type="term" value="C:cytoplasm"/>
    <property type="evidence" value="ECO:0007669"/>
    <property type="project" value="UniProtKB-SubCell"/>
</dbReference>
<dbReference type="GO" id="GO:0004844">
    <property type="term" value="F:uracil DNA N-glycosylase activity"/>
    <property type="evidence" value="ECO:0007669"/>
    <property type="project" value="UniProtKB-UniRule"/>
</dbReference>
<dbReference type="GO" id="GO:0097510">
    <property type="term" value="P:base-excision repair, AP site formation via deaminated base removal"/>
    <property type="evidence" value="ECO:0007669"/>
    <property type="project" value="TreeGrafter"/>
</dbReference>
<dbReference type="CDD" id="cd10027">
    <property type="entry name" value="UDG-F1-like"/>
    <property type="match status" value="1"/>
</dbReference>
<dbReference type="FunFam" id="3.40.470.10:FF:000001">
    <property type="entry name" value="Uracil-DNA glycosylase"/>
    <property type="match status" value="1"/>
</dbReference>
<dbReference type="Gene3D" id="3.40.470.10">
    <property type="entry name" value="Uracil-DNA glycosylase-like domain"/>
    <property type="match status" value="1"/>
</dbReference>
<dbReference type="HAMAP" id="MF_00148">
    <property type="entry name" value="UDG"/>
    <property type="match status" value="1"/>
</dbReference>
<dbReference type="InterPro" id="IPR002043">
    <property type="entry name" value="UDG_fam1"/>
</dbReference>
<dbReference type="InterPro" id="IPR018085">
    <property type="entry name" value="Ura-DNA_Glyclase_AS"/>
</dbReference>
<dbReference type="InterPro" id="IPR005122">
    <property type="entry name" value="Uracil-DNA_glycosylase-like"/>
</dbReference>
<dbReference type="InterPro" id="IPR036895">
    <property type="entry name" value="Uracil-DNA_glycosylase-like_sf"/>
</dbReference>
<dbReference type="NCBIfam" id="NF003588">
    <property type="entry name" value="PRK05254.1-1"/>
    <property type="match status" value="1"/>
</dbReference>
<dbReference type="NCBIfam" id="NF003589">
    <property type="entry name" value="PRK05254.1-2"/>
    <property type="match status" value="1"/>
</dbReference>
<dbReference type="NCBIfam" id="NF003591">
    <property type="entry name" value="PRK05254.1-4"/>
    <property type="match status" value="1"/>
</dbReference>
<dbReference type="NCBIfam" id="NF003592">
    <property type="entry name" value="PRK05254.1-5"/>
    <property type="match status" value="1"/>
</dbReference>
<dbReference type="NCBIfam" id="TIGR00628">
    <property type="entry name" value="ung"/>
    <property type="match status" value="1"/>
</dbReference>
<dbReference type="PANTHER" id="PTHR11264">
    <property type="entry name" value="URACIL-DNA GLYCOSYLASE"/>
    <property type="match status" value="1"/>
</dbReference>
<dbReference type="PANTHER" id="PTHR11264:SF0">
    <property type="entry name" value="URACIL-DNA GLYCOSYLASE"/>
    <property type="match status" value="1"/>
</dbReference>
<dbReference type="Pfam" id="PF03167">
    <property type="entry name" value="UDG"/>
    <property type="match status" value="1"/>
</dbReference>
<dbReference type="SMART" id="SM00986">
    <property type="entry name" value="UDG"/>
    <property type="match status" value="1"/>
</dbReference>
<dbReference type="SMART" id="SM00987">
    <property type="entry name" value="UreE_C"/>
    <property type="match status" value="1"/>
</dbReference>
<dbReference type="SUPFAM" id="SSF52141">
    <property type="entry name" value="Uracil-DNA glycosylase-like"/>
    <property type="match status" value="1"/>
</dbReference>
<dbReference type="PROSITE" id="PS00130">
    <property type="entry name" value="U_DNA_GLYCOSYLASE"/>
    <property type="match status" value="1"/>
</dbReference>
<feature type="chain" id="PRO_1000009864" description="Uracil-DNA glycosylase">
    <location>
        <begin position="1"/>
        <end position="227"/>
    </location>
</feature>
<feature type="active site" description="Proton acceptor" evidence="1">
    <location>
        <position position="65"/>
    </location>
</feature>
<reference key="1">
    <citation type="journal article" date="2007" name="Nat. Biotechnol.">
        <title>Comparative analysis of the complete genome sequence of the plant growth-promoting bacterium Bacillus amyloliquefaciens FZB42.</title>
        <authorList>
            <person name="Chen X.H."/>
            <person name="Koumoutsi A."/>
            <person name="Scholz R."/>
            <person name="Eisenreich A."/>
            <person name="Schneider K."/>
            <person name="Heinemeyer I."/>
            <person name="Morgenstern B."/>
            <person name="Voss B."/>
            <person name="Hess W.R."/>
            <person name="Reva O."/>
            <person name="Junge H."/>
            <person name="Voigt B."/>
            <person name="Jungblut P.R."/>
            <person name="Vater J."/>
            <person name="Suessmuth R."/>
            <person name="Liesegang H."/>
            <person name="Strittmatter A."/>
            <person name="Gottschalk G."/>
            <person name="Borriss R."/>
        </authorList>
    </citation>
    <scope>NUCLEOTIDE SEQUENCE [LARGE SCALE GENOMIC DNA]</scope>
    <source>
        <strain>DSM 23117 / BGSC 10A6 / LMG 26770 / FZB42</strain>
    </source>
</reference>